<proteinExistence type="evidence at protein level"/>
<sequence length="899" mass="103525">MVSLSNQTRFSFHPNNLVVSEKRRLGISGVNFPRKIKLKITCFAAERPRQEKQKKKSQSQSTSDAEAGVDPVGFLTRLGIADRIFAQFLRERHKALKDLKDEIFKRHFDFRDFASGFELLGMHRHMEHRVDFMDWGPGSRYGAIIGDFNGWSPTENAAREGLFGHDDYGYWFIILEDKLREGEEPDELYFQQYNYVDDYDKGDSGVSAEEIFQKANDEYWEPGEDRFIKNRFEVPAKLYEQMFGPNSPQTLEELGDIPDAETRYKQWKEEHKDDPPSNLPPCDIIDKGQGKPYDIFNVVTSPEWTKKFYEKEPPIPYWLETRKGRKAWLQKYIPAVPHGSKYRLYFNTPDGPLERVPAWATYVQPEDEGKQAYAIHWEPSPEAAYKWKYSKPKVPESLRIYECHVGISGSEPKVSTFEEFTKKVLPHVKRAGYNAIQLIGVPEHKDYFTVGYRVTNFFAASSRYGTPDDFKRLVDEAHGLGLLVFLDIVHSYAAADQMVGLSLFDGSNDCYFHYGKRGHHKHWGTRMFKYGDLDVLHFLISNLNWWITEYQVDGYQFHSLASMIYTHNGFASFNNDLDDYCNQYVDRDALMYLILANEILHVQHPNIITIAEDATYYPGLCEPVSQGGLGFDYYVNLSASEMWVSLLDNVPDNEWSMSKIVSTLVANKEYADKMLSYAENHNQSISGGRSFAEILFGGVDNGSPGGKELLDRGISLHKMIRLITFTSGGRAYLNFMGNEFGHPERVEFPTQSNNFSFSLANRRWDLLESGVHHHLFSFDKELMDLDKSKGILSRGLPSIHHVNDANMVISFSRGPFLFIFNFHPSNSYEKYDVGVEEAGEYTMILNSDEVKYGGQGIVTEDHYLQRSISKRIDGQRNCLEVFLPSRTAQVYKLTRILRI</sequence>
<protein>
    <recommendedName>
        <fullName>1,4-alpha-glucan-branching enzyme 3, chloroplastic/amyloplastic</fullName>
        <shortName>AtSBE III</shortName>
        <ecNumber>2.4.1.18</ecNumber>
    </recommendedName>
    <alternativeName>
        <fullName>Branching enzyme 1</fullName>
        <shortName>AtBE1</shortName>
    </alternativeName>
    <alternativeName>
        <fullName>Protein EMBRYO DEFECTIVE 2729</fullName>
    </alternativeName>
    <alternativeName>
        <fullName>Starch-branching enzyme 3</fullName>
    </alternativeName>
</protein>
<comment type="function">
    <text evidence="4 7">Catalyzes the formation of the alpha-1,6-glucosidic linkages in starch by scission of a 1,4-alpha-linked oligosaccharide from growing alpha-1,4-glucan chains and the subsequent attachment of the oligosaccharide to the alpha-1,6 position. Essential during embryogenesis.</text>
</comment>
<comment type="catalytic activity">
    <reaction>
        <text>Transfers a segment of a (1-&gt;4)-alpha-D-glucan chain to a primary hydroxy group in a similar glucan chain.</text>
        <dbReference type="EC" id="2.4.1.18"/>
    </reaction>
</comment>
<comment type="pathway">
    <text>Glycan biosynthesis; starch biosynthesis.</text>
</comment>
<comment type="subunit">
    <text evidence="1">Monomer.</text>
</comment>
<comment type="subcellular location">
    <subcellularLocation>
        <location evidence="6 7">Plastid</location>
        <location evidence="6 7">Chloroplast stroma</location>
    </subcellularLocation>
    <subcellularLocation>
        <location evidence="1">Plastid</location>
        <location evidence="1">Amyloplast</location>
    </subcellularLocation>
</comment>
<comment type="alternative products">
    <event type="alternative splicing"/>
    <isoform>
        <id>D2WL32-1</id>
        <name>1</name>
        <sequence type="displayed"/>
    </isoform>
    <isoform>
        <id>D2WL32-2</id>
        <name>2</name>
        <sequence type="described" ref="VSP_042217"/>
    </isoform>
    <isoform>
        <id>D2WL32-3</id>
        <name>3</name>
        <sequence type="described" ref="VSP_042216 VSP_042218 VSP_042219"/>
    </isoform>
</comment>
<comment type="tissue specificity">
    <text evidence="5 7">Mostly expressed in flowers and inflorescence, and, to a lower extent, in seedlings, roots, stems, leaves, siliques and seeds.</text>
</comment>
<comment type="disruption phenotype">
    <text evidence="4 7">Embryolethal. Embryo developmental arrests at the heart stage associated with reduced cell divisions and abnormal cell differentiation, thereby leading to defects in setting up the shoot apical meristem, embryonic vascular tissues and cotyledons. Modified starch composition. This phenotype is enhanced when associated with SBE2.1 and SBE2.2 disruptions.</text>
</comment>
<comment type="similarity">
    <text evidence="9">Belongs to the glycosyl hydrolase 13 family. GlgB subfamily.</text>
</comment>
<comment type="sequence caution" evidence="9">
    <conflict type="erroneous gene model prediction">
        <sequence resource="EMBL-CDS" id="BAB02827"/>
    </conflict>
</comment>
<accession>D2WL32</accession>
<accession>F4JEP1</accession>
<accession>Q8GWK4</accession>
<accession>Q9LTP8</accession>
<evidence type="ECO:0000250" key="1"/>
<evidence type="ECO:0000255" key="2"/>
<evidence type="ECO:0000256" key="3">
    <source>
        <dbReference type="SAM" id="MobiDB-lite"/>
    </source>
</evidence>
<evidence type="ECO:0000269" key="4">
    <source>
    </source>
</evidence>
<evidence type="ECO:0000269" key="5">
    <source>
    </source>
</evidence>
<evidence type="ECO:0000269" key="6">
    <source>
    </source>
</evidence>
<evidence type="ECO:0000269" key="7">
    <source>
    </source>
</evidence>
<evidence type="ECO:0000303" key="8">
    <source>
    </source>
</evidence>
<evidence type="ECO:0000305" key="9"/>
<feature type="transit peptide" description="Chloroplast" evidence="2">
    <location>
        <begin position="1"/>
        <end position="49"/>
    </location>
</feature>
<feature type="chain" id="PRO_0000415337" description="1,4-alpha-glucan-branching enzyme 3, chloroplastic/amyloplastic">
    <location>
        <begin position="50"/>
        <end position="899"/>
    </location>
</feature>
<feature type="region of interest" description="Disordered" evidence="3">
    <location>
        <begin position="47"/>
        <end position="67"/>
    </location>
</feature>
<feature type="active site" description="Proton donor" evidence="1">
    <location>
        <position position="612"/>
    </location>
</feature>
<feature type="splice variant" id="VSP_042216" description="In isoform 3." evidence="9">
    <original>P</original>
    <variation>PGMTAF</variation>
    <location>
        <position position="365"/>
    </location>
</feature>
<feature type="splice variant" id="VSP_042217" description="In isoform 2." evidence="8">
    <location>
        <begin position="424"/>
        <end position="453"/>
    </location>
</feature>
<feature type="splice variant" id="VSP_042218" description="In isoform 3." evidence="9">
    <original>K</original>
    <variation>KVS</variation>
    <location>
        <position position="780"/>
    </location>
</feature>
<feature type="splice variant" id="VSP_042219" description="In isoform 3." evidence="9">
    <location>
        <begin position="881"/>
        <end position="889"/>
    </location>
</feature>
<feature type="mutagenesis site" description="In be1-3; reduced level of BE1 transcription and various developmental defects during post-germination growth such as shorter primary roots, delayed greening of cotyledons and leaf development, yellowish and small leaves leading to smaller plants with altered petals and sepals in flowers." evidence="7">
    <original>E</original>
    <variation>K</variation>
    <location>
        <position position="366"/>
    </location>
</feature>
<keyword id="KW-0025">Alternative splicing</keyword>
<keyword id="KW-0035">Amyloplast</keyword>
<keyword id="KW-0150">Chloroplast</keyword>
<keyword id="KW-0328">Glycosyltransferase</keyword>
<keyword id="KW-0934">Plastid</keyword>
<keyword id="KW-1185">Reference proteome</keyword>
<keyword id="KW-0808">Transferase</keyword>
<keyword id="KW-0809">Transit peptide</keyword>
<dbReference type="EC" id="2.4.1.18"/>
<dbReference type="EMBL" id="GQ374452">
    <property type="protein sequence ID" value="ADB29066.1"/>
    <property type="molecule type" value="mRNA"/>
</dbReference>
<dbReference type="EMBL" id="AB024036">
    <property type="protein sequence ID" value="BAB02827.1"/>
    <property type="status" value="ALT_SEQ"/>
    <property type="molecule type" value="Genomic_DNA"/>
</dbReference>
<dbReference type="EMBL" id="CP002686">
    <property type="protein sequence ID" value="AEE76378.1"/>
    <property type="molecule type" value="Genomic_DNA"/>
</dbReference>
<dbReference type="EMBL" id="CP002686">
    <property type="protein sequence ID" value="AEE76379.1"/>
    <property type="molecule type" value="Genomic_DNA"/>
</dbReference>
<dbReference type="EMBL" id="CP002686">
    <property type="protein sequence ID" value="AEE76380.1"/>
    <property type="molecule type" value="Genomic_DNA"/>
</dbReference>
<dbReference type="EMBL" id="AK118785">
    <property type="protein sequence ID" value="BAC43378.1"/>
    <property type="molecule type" value="mRNA"/>
</dbReference>
<dbReference type="RefSeq" id="NP_001154629.1">
    <molecule id="D2WL32-1"/>
    <property type="nucleotide sequence ID" value="NM_001161157.2"/>
</dbReference>
<dbReference type="RefSeq" id="NP_001189940.1">
    <molecule id="D2WL32-3"/>
    <property type="nucleotide sequence ID" value="NM_001203011.1"/>
</dbReference>
<dbReference type="RefSeq" id="NP_188679.2">
    <molecule id="D2WL32-2"/>
    <property type="nucleotide sequence ID" value="NM_112935.2"/>
</dbReference>
<dbReference type="SMR" id="D2WL32"/>
<dbReference type="FunCoup" id="D2WL32">
    <property type="interactions" value="228"/>
</dbReference>
<dbReference type="STRING" id="3702.D2WL32"/>
<dbReference type="CAZy" id="CBM48">
    <property type="family name" value="Carbohydrate-Binding Module Family 48"/>
</dbReference>
<dbReference type="CAZy" id="GH13">
    <property type="family name" value="Glycoside Hydrolase Family 13"/>
</dbReference>
<dbReference type="PaxDb" id="3702-AT3G20440.2"/>
<dbReference type="ProteomicsDB" id="248572">
    <molecule id="D2WL32-1"/>
</dbReference>
<dbReference type="EnsemblPlants" id="AT3G20440.1">
    <molecule id="D2WL32-2"/>
    <property type="protein sequence ID" value="AT3G20440.1"/>
    <property type="gene ID" value="AT3G20440"/>
</dbReference>
<dbReference type="EnsemblPlants" id="AT3G20440.2">
    <molecule id="D2WL32-1"/>
    <property type="protein sequence ID" value="AT3G20440.2"/>
    <property type="gene ID" value="AT3G20440"/>
</dbReference>
<dbReference type="EnsemblPlants" id="AT3G20440.3">
    <molecule id="D2WL32-3"/>
    <property type="protein sequence ID" value="AT3G20440.3"/>
    <property type="gene ID" value="AT3G20440"/>
</dbReference>
<dbReference type="GeneID" id="821589"/>
<dbReference type="Gramene" id="AT3G20440.1">
    <molecule id="D2WL32-2"/>
    <property type="protein sequence ID" value="AT3G20440.1"/>
    <property type="gene ID" value="AT3G20440"/>
</dbReference>
<dbReference type="Gramene" id="AT3G20440.2">
    <molecule id="D2WL32-1"/>
    <property type="protein sequence ID" value="AT3G20440.2"/>
    <property type="gene ID" value="AT3G20440"/>
</dbReference>
<dbReference type="Gramene" id="AT3G20440.3">
    <molecule id="D2WL32-3"/>
    <property type="protein sequence ID" value="AT3G20440.3"/>
    <property type="gene ID" value="AT3G20440"/>
</dbReference>
<dbReference type="KEGG" id="ath:AT3G20440"/>
<dbReference type="Araport" id="AT3G20440"/>
<dbReference type="TAIR" id="AT3G20440">
    <property type="gene designation" value="EMB2729"/>
</dbReference>
<dbReference type="eggNOG" id="KOG0470">
    <property type="taxonomic scope" value="Eukaryota"/>
</dbReference>
<dbReference type="HOGENOM" id="CLU_011131_1_1_1"/>
<dbReference type="InParanoid" id="D2WL32"/>
<dbReference type="OMA" id="HWDPPPE"/>
<dbReference type="BioCyc" id="ARA:AT3G20440-MONOMER"/>
<dbReference type="UniPathway" id="UPA00152"/>
<dbReference type="PRO" id="PR:D2WL32"/>
<dbReference type="Proteomes" id="UP000006548">
    <property type="component" value="Chromosome 3"/>
</dbReference>
<dbReference type="ExpressionAtlas" id="D2WL32">
    <property type="expression patterns" value="baseline and differential"/>
</dbReference>
<dbReference type="GO" id="GO:0009501">
    <property type="term" value="C:amyloplast"/>
    <property type="evidence" value="ECO:0007669"/>
    <property type="project" value="UniProtKB-SubCell"/>
</dbReference>
<dbReference type="GO" id="GO:0009507">
    <property type="term" value="C:chloroplast"/>
    <property type="evidence" value="ECO:0007005"/>
    <property type="project" value="TAIR"/>
</dbReference>
<dbReference type="GO" id="GO:0009570">
    <property type="term" value="C:chloroplast stroma"/>
    <property type="evidence" value="ECO:0007669"/>
    <property type="project" value="UniProtKB-SubCell"/>
</dbReference>
<dbReference type="GO" id="GO:0009536">
    <property type="term" value="C:plastid"/>
    <property type="evidence" value="ECO:0000314"/>
    <property type="project" value="TAIR"/>
</dbReference>
<dbReference type="GO" id="GO:0003844">
    <property type="term" value="F:1,4-alpha-glucan branching enzyme activity"/>
    <property type="evidence" value="ECO:0007669"/>
    <property type="project" value="UniProtKB-EC"/>
</dbReference>
<dbReference type="GO" id="GO:0043169">
    <property type="term" value="F:cation binding"/>
    <property type="evidence" value="ECO:0007669"/>
    <property type="project" value="InterPro"/>
</dbReference>
<dbReference type="GO" id="GO:0005975">
    <property type="term" value="P:carbohydrate metabolic process"/>
    <property type="evidence" value="ECO:0000315"/>
    <property type="project" value="TAIR"/>
</dbReference>
<dbReference type="GO" id="GO:0005978">
    <property type="term" value="P:glycogen biosynthetic process"/>
    <property type="evidence" value="ECO:0007669"/>
    <property type="project" value="InterPro"/>
</dbReference>
<dbReference type="GO" id="GO:0009791">
    <property type="term" value="P:post-embryonic development"/>
    <property type="evidence" value="ECO:0000315"/>
    <property type="project" value="TAIR"/>
</dbReference>
<dbReference type="GO" id="GO:0019252">
    <property type="term" value="P:starch biosynthetic process"/>
    <property type="evidence" value="ECO:0007669"/>
    <property type="project" value="UniProtKB-UniPathway"/>
</dbReference>
<dbReference type="FunFam" id="2.60.40.10:FF:001322">
    <property type="entry name" value="1,4-alpha-glucan-branching enzyme 3"/>
    <property type="match status" value="1"/>
</dbReference>
<dbReference type="FunFam" id="2.60.40.10:FF:001359">
    <property type="entry name" value="1,4-alpha-glucan-branching enzyme 3, chloroplastic/amyloplastic"/>
    <property type="match status" value="1"/>
</dbReference>
<dbReference type="FunFam" id="2.60.40.1180:FF:000045">
    <property type="entry name" value="1,4-alpha-glucan-branching enzyme 3, chloroplastic/amyloplastic"/>
    <property type="match status" value="1"/>
</dbReference>
<dbReference type="FunFam" id="3.20.20.80:FF:000093">
    <property type="entry name" value="1,4-alpha-glucan-branching enzyme 3, chloroplastic/amyloplastic"/>
    <property type="match status" value="1"/>
</dbReference>
<dbReference type="Gene3D" id="3.20.20.80">
    <property type="entry name" value="Glycosidases"/>
    <property type="match status" value="1"/>
</dbReference>
<dbReference type="Gene3D" id="2.60.40.1180">
    <property type="entry name" value="Golgi alpha-mannosidase II"/>
    <property type="match status" value="1"/>
</dbReference>
<dbReference type="Gene3D" id="2.60.40.10">
    <property type="entry name" value="Immunoglobulins"/>
    <property type="match status" value="2"/>
</dbReference>
<dbReference type="InterPro" id="IPR006048">
    <property type="entry name" value="A-amylase/branching_C"/>
</dbReference>
<dbReference type="InterPro" id="IPR037439">
    <property type="entry name" value="Branching_enzy"/>
</dbReference>
<dbReference type="InterPro" id="IPR006047">
    <property type="entry name" value="Glyco_hydro_13_cat_dom"/>
</dbReference>
<dbReference type="InterPro" id="IPR013780">
    <property type="entry name" value="Glyco_hydro_b"/>
</dbReference>
<dbReference type="InterPro" id="IPR017853">
    <property type="entry name" value="Glycoside_hydrolase_SF"/>
</dbReference>
<dbReference type="InterPro" id="IPR013783">
    <property type="entry name" value="Ig-like_fold"/>
</dbReference>
<dbReference type="PANTHER" id="PTHR43651">
    <property type="entry name" value="1,4-ALPHA-GLUCAN-BRANCHING ENZYME"/>
    <property type="match status" value="1"/>
</dbReference>
<dbReference type="PANTHER" id="PTHR43651:SF4">
    <property type="entry name" value="1,4-ALPHA-GLUCAN-BRANCHING ENZYME 3, CHLOROPLASTIC_AMYLOPLASTIC"/>
    <property type="match status" value="1"/>
</dbReference>
<dbReference type="Pfam" id="PF00128">
    <property type="entry name" value="Alpha-amylase"/>
    <property type="match status" value="1"/>
</dbReference>
<dbReference type="Pfam" id="PF02806">
    <property type="entry name" value="Alpha-amylase_C"/>
    <property type="match status" value="1"/>
</dbReference>
<dbReference type="PIRSF" id="PIRSF000463">
    <property type="entry name" value="GlgB"/>
    <property type="match status" value="1"/>
</dbReference>
<dbReference type="SMART" id="SM00642">
    <property type="entry name" value="Aamy"/>
    <property type="match status" value="1"/>
</dbReference>
<dbReference type="SUPFAM" id="SSF51445">
    <property type="entry name" value="(Trans)glycosidases"/>
    <property type="match status" value="1"/>
</dbReference>
<dbReference type="SUPFAM" id="SSF51011">
    <property type="entry name" value="Glycosyl hydrolase domain"/>
    <property type="match status" value="1"/>
</dbReference>
<gene>
    <name type="primary">SBE3</name>
    <name type="synonym">BE1</name>
    <name type="synonym">EMB2729</name>
    <name type="ordered locus">At3g20440</name>
    <name type="ORF">MQC12.20</name>
</gene>
<name>GLGB3_ARATH</name>
<reference key="1">
    <citation type="journal article" date="2010" name="J. Integr. Plant Biol.">
        <title>The Arabidopsis BE1 gene, encoding a putative glycoside hydrolase localized in plastids, plays crucial roles during embryogenesis and carbohydrate metabolism.</title>
        <authorList>
            <person name="Wang X."/>
            <person name="Xue L."/>
            <person name="Sun J."/>
            <person name="Zuo J."/>
        </authorList>
    </citation>
    <scope>NUCLEOTIDE SEQUENCE [MRNA] (ISOFORM 1)</scope>
    <scope>FUNCTION</scope>
    <scope>SUBCELLULAR LOCATION</scope>
    <scope>TISSUE SPECIFICITY</scope>
    <scope>MUTAGENESIS OF GLU-366</scope>
    <scope>DISRUPTION PHENOTYPE</scope>
    <source>
        <strain>cv. Columbia</strain>
    </source>
</reference>
<reference key="2">
    <citation type="journal article" date="2000" name="DNA Res.">
        <title>Structural analysis of Arabidopsis thaliana chromosome 3. I. Sequence features of the regions of 4,504,864 bp covered by sixty P1 and TAC clones.</title>
        <authorList>
            <person name="Sato S."/>
            <person name="Nakamura Y."/>
            <person name="Kaneko T."/>
            <person name="Katoh T."/>
            <person name="Asamizu E."/>
            <person name="Tabata S."/>
        </authorList>
    </citation>
    <scope>NUCLEOTIDE SEQUENCE [LARGE SCALE GENOMIC DNA]</scope>
    <source>
        <strain>cv. Columbia</strain>
    </source>
</reference>
<reference key="3">
    <citation type="journal article" date="2017" name="Plant J.">
        <title>Araport11: a complete reannotation of the Arabidopsis thaliana reference genome.</title>
        <authorList>
            <person name="Cheng C.Y."/>
            <person name="Krishnakumar V."/>
            <person name="Chan A.P."/>
            <person name="Thibaud-Nissen F."/>
            <person name="Schobel S."/>
            <person name="Town C.D."/>
        </authorList>
    </citation>
    <scope>GENOME REANNOTATION</scope>
    <source>
        <strain>cv. Columbia</strain>
    </source>
</reference>
<reference key="4">
    <citation type="journal article" date="2002" name="Science">
        <title>Functional annotation of a full-length Arabidopsis cDNA collection.</title>
        <authorList>
            <person name="Seki M."/>
            <person name="Narusaka M."/>
            <person name="Kamiya A."/>
            <person name="Ishida J."/>
            <person name="Satou M."/>
            <person name="Sakurai T."/>
            <person name="Nakajima M."/>
            <person name="Enju A."/>
            <person name="Akiyama K."/>
            <person name="Oono Y."/>
            <person name="Muramatsu M."/>
            <person name="Hayashizaki Y."/>
            <person name="Kawai J."/>
            <person name="Carninci P."/>
            <person name="Itoh M."/>
            <person name="Ishii Y."/>
            <person name="Arakawa T."/>
            <person name="Shibata K."/>
            <person name="Shinagawa A."/>
            <person name="Shinozaki K."/>
        </authorList>
    </citation>
    <scope>NUCLEOTIDE SEQUENCE [LARGE SCALE MRNA] (ISOFORM 2)</scope>
    <source>
        <strain>cv. Columbia</strain>
    </source>
</reference>
<reference key="5">
    <citation type="journal article" date="2006" name="Plant Cell">
        <title>Mutants of Arabidopsis lacking starch branching enzyme II substitute plastidial starch synthesis by cytoplasmic maltose accumulation.</title>
        <authorList>
            <person name="Dumez S."/>
            <person name="Wattebled F."/>
            <person name="Dauvillee D."/>
            <person name="Delvalle D."/>
            <person name="Planchot V."/>
            <person name="Ball S.G."/>
            <person name="D'Hulst C."/>
        </authorList>
    </citation>
    <scope>FUNCTION</scope>
    <scope>DISRUPTION PHENOTYPE</scope>
    <source>
        <strain>cv. Columbia</strain>
        <strain>cv. Wassilewskija</strain>
    </source>
</reference>
<reference key="6">
    <citation type="journal article" date="2007" name="Gene">
        <title>Three orthologs in rice, Arabidopsis, and Populus encoding starch branching enzymes (SBEs) are different from other SBE gene families in plants.</title>
        <authorList>
            <person name="Han Y."/>
            <person name="Sun F.-J."/>
            <person name="Rosales-Mendoza S."/>
            <person name="Korban S.S."/>
        </authorList>
    </citation>
    <scope>TISSUE SPECIFICITY</scope>
    <scope>GENE FAMILY</scope>
    <scope>NOMENCLATURE</scope>
    <source>
        <strain>cv. Columbia</strain>
    </source>
</reference>
<reference key="7">
    <citation type="journal article" date="2008" name="PLoS ONE">
        <title>Sorting signals, N-terminal modifications and abundance of the chloroplast proteome.</title>
        <authorList>
            <person name="Zybailov B."/>
            <person name="Rutschow H."/>
            <person name="Friso G."/>
            <person name="Rudella A."/>
            <person name="Emanuelsson O."/>
            <person name="Sun Q."/>
            <person name="van Wijk K.J."/>
        </authorList>
    </citation>
    <scope>IDENTIFICATION BY MASS SPECTROMETRY</scope>
    <scope>SUBCELLULAR LOCATION [LARGE SCALE ANALYSIS]</scope>
    <source>
        <strain>cv. Columbia</strain>
    </source>
</reference>
<organism>
    <name type="scientific">Arabidopsis thaliana</name>
    <name type="common">Mouse-ear cress</name>
    <dbReference type="NCBI Taxonomy" id="3702"/>
    <lineage>
        <taxon>Eukaryota</taxon>
        <taxon>Viridiplantae</taxon>
        <taxon>Streptophyta</taxon>
        <taxon>Embryophyta</taxon>
        <taxon>Tracheophyta</taxon>
        <taxon>Spermatophyta</taxon>
        <taxon>Magnoliopsida</taxon>
        <taxon>eudicotyledons</taxon>
        <taxon>Gunneridae</taxon>
        <taxon>Pentapetalae</taxon>
        <taxon>rosids</taxon>
        <taxon>malvids</taxon>
        <taxon>Brassicales</taxon>
        <taxon>Brassicaceae</taxon>
        <taxon>Camelineae</taxon>
        <taxon>Arabidopsis</taxon>
    </lineage>
</organism>